<sequence length="363" mass="39136">MASSASKTNIGVFTNPQHDLWISEASPSLESVQKGEELKEGEVTVAVRSTGICGSDVHFWKHGCIGPMIVECDHVLGHESAGEVIAVHPSVKSIKVGDRVAIEPQVICNACEPCLTGRYNGCERVDFLSTPPVPGLLRRYVNHPAVWCHKIGNMSYENGAMLEPLSVALAGLQRAGVRLGDPVLICGAGPIGLITMLCAKAAGACPLVITDIDEGRLKFAKEICPEVVTHKVERLSAEESAKKIVESFGGIEPAVALECTGVESSIAAAIWAVKFGGKVFVIGVGKNEIQIPFMRASVREVDLQFQYRYCNTWPRAIRLVENGLVDLTRLVTHRFPLEDALKAFETASDPKTGAIKVQIQSLE</sequence>
<organism>
    <name type="scientific">Neurospora crassa (strain ATCC 24698 / 74-OR23-1A / CBS 708.71 / DSM 1257 / FGSC 987)</name>
    <dbReference type="NCBI Taxonomy" id="367110"/>
    <lineage>
        <taxon>Eukaryota</taxon>
        <taxon>Fungi</taxon>
        <taxon>Dikarya</taxon>
        <taxon>Ascomycota</taxon>
        <taxon>Pezizomycotina</taxon>
        <taxon>Sordariomycetes</taxon>
        <taxon>Sordariomycetidae</taxon>
        <taxon>Sordariales</taxon>
        <taxon>Sordariaceae</taxon>
        <taxon>Neurospora</taxon>
    </lineage>
</organism>
<comment type="function">
    <text evidence="1">Catalyzes the NAD-dependent oxidation of L-arabinitol to L-xylulose in the fungal L-arabinose catabolic pathway. L-arabinose catabolism is important for using plant material as a carbon source. Not active on D-arabinitol, D-sorbitol and D-mannitol.</text>
</comment>
<comment type="catalytic activity">
    <reaction evidence="1">
        <text>L-arabinitol + NAD(+) = L-xylulose + NADH + H(+)</text>
        <dbReference type="Rhea" id="RHEA:16381"/>
        <dbReference type="ChEBI" id="CHEBI:15378"/>
        <dbReference type="ChEBI" id="CHEBI:17399"/>
        <dbReference type="ChEBI" id="CHEBI:18403"/>
        <dbReference type="ChEBI" id="CHEBI:57540"/>
        <dbReference type="ChEBI" id="CHEBI:57945"/>
        <dbReference type="EC" id="1.1.1.12"/>
    </reaction>
</comment>
<comment type="cofactor">
    <cofactor evidence="1 2">
        <name>Zn(2+)</name>
        <dbReference type="ChEBI" id="CHEBI:29105"/>
    </cofactor>
    <text evidence="1 2">Binds 2 Zn(2+) ions per subunit.</text>
</comment>
<comment type="biophysicochemical properties">
    <kinetics>
        <KM evidence="1">16 mM for L-arabinitol (at pH 8)</KM>
        <KM evidence="1">290 mM for xylitol (at pH 8)</KM>
        <KM evidence="1">35 mM for adonitol (at pH 8)</KM>
        <KM evidence="1">174 uM for NAD (at pH 8)</KM>
    </kinetics>
    <phDependence>
        <text evidence="1">Optimum pH is 9.5. Active from pH 8 to pH 10.5.</text>
    </phDependence>
    <temperatureDependence>
        <text evidence="1">Optimum temperature is 45-55 degrees Celsius.</text>
    </temperatureDependence>
</comment>
<comment type="pathway">
    <text>Carbohydrate degradation; L-arabinose degradation via L-arabinitol; D-xylulose 5-phosphate from L-arabinose (fungal route): step 2/5.</text>
</comment>
<comment type="subunit">
    <text evidence="1 2">Homotetramer.</text>
</comment>
<comment type="similarity">
    <text evidence="3">Belongs to the zinc-containing alcohol dehydrogenase family.</text>
</comment>
<reference key="1">
    <citation type="journal article" date="2003" name="Nature">
        <title>The genome sequence of the filamentous fungus Neurospora crassa.</title>
        <authorList>
            <person name="Galagan J.E."/>
            <person name="Calvo S.E."/>
            <person name="Borkovich K.A."/>
            <person name="Selker E.U."/>
            <person name="Read N.D."/>
            <person name="Jaffe D.B."/>
            <person name="FitzHugh W."/>
            <person name="Ma L.-J."/>
            <person name="Smirnov S."/>
            <person name="Purcell S."/>
            <person name="Rehman B."/>
            <person name="Elkins T."/>
            <person name="Engels R."/>
            <person name="Wang S."/>
            <person name="Nielsen C.B."/>
            <person name="Butler J."/>
            <person name="Endrizzi M."/>
            <person name="Qui D."/>
            <person name="Ianakiev P."/>
            <person name="Bell-Pedersen D."/>
            <person name="Nelson M.A."/>
            <person name="Werner-Washburne M."/>
            <person name="Selitrennikoff C.P."/>
            <person name="Kinsey J.A."/>
            <person name="Braun E.L."/>
            <person name="Zelter A."/>
            <person name="Schulte U."/>
            <person name="Kothe G.O."/>
            <person name="Jedd G."/>
            <person name="Mewes H.-W."/>
            <person name="Staben C."/>
            <person name="Marcotte E."/>
            <person name="Greenberg D."/>
            <person name="Roy A."/>
            <person name="Foley K."/>
            <person name="Naylor J."/>
            <person name="Stange-Thomann N."/>
            <person name="Barrett R."/>
            <person name="Gnerre S."/>
            <person name="Kamal M."/>
            <person name="Kamvysselis M."/>
            <person name="Mauceli E.W."/>
            <person name="Bielke C."/>
            <person name="Rudd S."/>
            <person name="Frishman D."/>
            <person name="Krystofova S."/>
            <person name="Rasmussen C."/>
            <person name="Metzenberg R.L."/>
            <person name="Perkins D.D."/>
            <person name="Kroken S."/>
            <person name="Cogoni C."/>
            <person name="Macino G."/>
            <person name="Catcheside D.E.A."/>
            <person name="Li W."/>
            <person name="Pratt R.J."/>
            <person name="Osmani S.A."/>
            <person name="DeSouza C.P.C."/>
            <person name="Glass N.L."/>
            <person name="Orbach M.J."/>
            <person name="Berglund J.A."/>
            <person name="Voelker R."/>
            <person name="Yarden O."/>
            <person name="Plamann M."/>
            <person name="Seiler S."/>
            <person name="Dunlap J.C."/>
            <person name="Radford A."/>
            <person name="Aramayo R."/>
            <person name="Natvig D.O."/>
            <person name="Alex L.A."/>
            <person name="Mannhaupt G."/>
            <person name="Ebbole D.J."/>
            <person name="Freitag M."/>
            <person name="Paulsen I."/>
            <person name="Sachs M.S."/>
            <person name="Lander E.S."/>
            <person name="Nusbaum C."/>
            <person name="Birren B.W."/>
        </authorList>
    </citation>
    <scope>NUCLEOTIDE SEQUENCE [LARGE SCALE GENOMIC DNA]</scope>
    <source>
        <strain>ATCC 24698 / 74-OR23-1A / CBS 708.71 / DSM 1257 / FGSC 987</strain>
    </source>
</reference>
<reference key="2">
    <citation type="journal article" date="2007" name="Appl. Microbiol. Biotechnol.">
        <title>Cloning, characterization, and mutational analysis of a highly active and stable L-arabinitol 4-dehydrogenase from Neurospora crassa.</title>
        <authorList>
            <person name="Sullivan R."/>
            <person name="Zhao H."/>
        </authorList>
    </citation>
    <scope>FUNCTION</scope>
    <scope>CATALYTIC ACTIVITY</scope>
    <scope>SUBUNIT</scope>
    <scope>COFACTOR</scope>
    <scope>MUTAGENESIS OF PHE-59</scope>
    <scope>BIOPHYSICOCHEMICAL PROPERTIES</scope>
</reference>
<reference key="3">
    <citation type="journal article" date="2010" name="J. Mol. Biol.">
        <title>Structure and engineering of L-arabinitol 4-dehydrogenase from Neurospora crassa.</title>
        <authorList>
            <person name="Bae B."/>
            <person name="Sullivan R.P."/>
            <person name="Zhao H."/>
            <person name="Nair S.K."/>
        </authorList>
    </citation>
    <scope>X-RAY CRYSTALLOGRAPHY (2.60 ANGSTROMS) IN COMPLEX WITH NAD AND ZINC</scope>
    <scope>MUTAGENESIS OF 211-ASP-ILE-212 AND SER-348</scope>
    <scope>COFACTOR</scope>
    <scope>SUBUNIT</scope>
</reference>
<gene>
    <name type="primary">ard-1</name>
    <name type="ORF">NCU00643</name>
</gene>
<accession>Q7SI09</accession>
<feature type="chain" id="PRO_0000418405" description="L-arabinitol 4-dehydrogenase">
    <location>
        <begin position="1"/>
        <end position="363"/>
    </location>
</feature>
<feature type="binding site" evidence="2">
    <location>
        <position position="53"/>
    </location>
    <ligand>
        <name>Zn(2+)</name>
        <dbReference type="ChEBI" id="CHEBI:29105"/>
        <label>1</label>
        <note>catalytic</note>
    </ligand>
</feature>
<feature type="binding site" evidence="2">
    <location>
        <position position="78"/>
    </location>
    <ligand>
        <name>Zn(2+)</name>
        <dbReference type="ChEBI" id="CHEBI:29105"/>
        <label>1</label>
        <note>catalytic</note>
    </ligand>
</feature>
<feature type="binding site" evidence="2">
    <location>
        <position position="79"/>
    </location>
    <ligand>
        <name>Zn(2+)</name>
        <dbReference type="ChEBI" id="CHEBI:29105"/>
        <label>1</label>
        <note>catalytic</note>
    </ligand>
</feature>
<feature type="binding site" evidence="2">
    <location>
        <position position="108"/>
    </location>
    <ligand>
        <name>Zn(2+)</name>
        <dbReference type="ChEBI" id="CHEBI:29105"/>
        <label>2</label>
        <note>structural</note>
    </ligand>
</feature>
<feature type="binding site" evidence="2">
    <location>
        <position position="111"/>
    </location>
    <ligand>
        <name>Zn(2+)</name>
        <dbReference type="ChEBI" id="CHEBI:29105"/>
        <label>2</label>
        <note>structural</note>
    </ligand>
</feature>
<feature type="binding site" evidence="2">
    <location>
        <position position="114"/>
    </location>
    <ligand>
        <name>Zn(2+)</name>
        <dbReference type="ChEBI" id="CHEBI:29105"/>
        <label>2</label>
        <note>structural</note>
    </ligand>
</feature>
<feature type="binding site" evidence="2">
    <location>
        <position position="122"/>
    </location>
    <ligand>
        <name>Zn(2+)</name>
        <dbReference type="ChEBI" id="CHEBI:29105"/>
        <label>2</label>
        <note>structural</note>
    </ligand>
</feature>
<feature type="binding site" evidence="2">
    <location>
        <position position="163"/>
    </location>
    <ligand>
        <name>Zn(2+)</name>
        <dbReference type="ChEBI" id="CHEBI:29105"/>
        <label>1</label>
        <note>catalytic</note>
    </ligand>
</feature>
<feature type="binding site" evidence="2">
    <location>
        <begin position="190"/>
        <end position="191"/>
    </location>
    <ligand>
        <name>NAD(+)</name>
        <dbReference type="ChEBI" id="CHEBI:57540"/>
    </ligand>
</feature>
<feature type="binding site" evidence="2">
    <location>
        <position position="211"/>
    </location>
    <ligand>
        <name>NAD(+)</name>
        <dbReference type="ChEBI" id="CHEBI:57540"/>
    </ligand>
</feature>
<feature type="binding site" evidence="2">
    <location>
        <position position="216"/>
    </location>
    <ligand>
        <name>NAD(+)</name>
        <dbReference type="ChEBI" id="CHEBI:57540"/>
    </ligand>
</feature>
<feature type="binding site" evidence="2">
    <location>
        <position position="282"/>
    </location>
    <ligand>
        <name>NAD(+)</name>
        <dbReference type="ChEBI" id="CHEBI:57540"/>
    </ligand>
</feature>
<feature type="binding site" evidence="2">
    <location>
        <begin position="306"/>
        <end position="308"/>
    </location>
    <ligand>
        <name>NAD(+)</name>
        <dbReference type="ChEBI" id="CHEBI:57540"/>
    </ligand>
</feature>
<feature type="mutagenesis site" description="No effect." evidence="1">
    <original>F</original>
    <variation>A</variation>
    <variation>S</variation>
    <variation>Y</variation>
    <location>
        <position position="59"/>
    </location>
</feature>
<feature type="mutagenesis site" description="Alters cofactor specificity from NAD to NADP; when associated with T-348." evidence="2">
    <original>DI</original>
    <variation>SR</variation>
    <location>
        <begin position="211"/>
        <end position="212"/>
    </location>
</feature>
<feature type="mutagenesis site" description="Alters cofactor specificity from NAD to NADP; when associated with 211-SR-212." evidence="2">
    <original>S</original>
    <variation>T</variation>
    <location>
        <position position="348"/>
    </location>
</feature>
<feature type="strand" evidence="4">
    <location>
        <begin position="10"/>
        <end position="14"/>
    </location>
</feature>
<feature type="strand" evidence="4">
    <location>
        <begin position="20"/>
        <end position="24"/>
    </location>
</feature>
<feature type="helix" evidence="4">
    <location>
        <begin position="29"/>
        <end position="34"/>
    </location>
</feature>
<feature type="strand" evidence="4">
    <location>
        <begin position="42"/>
        <end position="51"/>
    </location>
</feature>
<feature type="helix" evidence="4">
    <location>
        <begin position="54"/>
        <end position="62"/>
    </location>
</feature>
<feature type="strand" evidence="4">
    <location>
        <begin position="63"/>
        <end position="67"/>
    </location>
</feature>
<feature type="strand" evidence="4">
    <location>
        <begin position="79"/>
        <end position="87"/>
    </location>
</feature>
<feature type="strand" evidence="4">
    <location>
        <begin position="99"/>
        <end position="102"/>
    </location>
</feature>
<feature type="helix" evidence="4">
    <location>
        <begin position="112"/>
        <end position="115"/>
    </location>
</feature>
<feature type="helix" evidence="4">
    <location>
        <begin position="119"/>
        <end position="121"/>
    </location>
</feature>
<feature type="strand" evidence="4">
    <location>
        <begin position="138"/>
        <end position="144"/>
    </location>
</feature>
<feature type="helix" evidence="4">
    <location>
        <begin position="145"/>
        <end position="147"/>
    </location>
</feature>
<feature type="strand" evidence="4">
    <location>
        <begin position="148"/>
        <end position="150"/>
    </location>
</feature>
<feature type="helix" evidence="4">
    <location>
        <begin position="156"/>
        <end position="175"/>
    </location>
</feature>
<feature type="strand" evidence="4">
    <location>
        <begin position="183"/>
        <end position="186"/>
    </location>
</feature>
<feature type="helix" evidence="4">
    <location>
        <begin position="190"/>
        <end position="201"/>
    </location>
</feature>
<feature type="strand" evidence="4">
    <location>
        <begin position="206"/>
        <end position="212"/>
    </location>
</feature>
<feature type="helix" evidence="4">
    <location>
        <begin position="214"/>
        <end position="223"/>
    </location>
</feature>
<feature type="strand" evidence="4">
    <location>
        <begin position="228"/>
        <end position="231"/>
    </location>
</feature>
<feature type="helix" evidence="4">
    <location>
        <begin position="237"/>
        <end position="247"/>
    </location>
</feature>
<feature type="strand" evidence="4">
    <location>
        <begin position="254"/>
        <end position="258"/>
    </location>
</feature>
<feature type="helix" evidence="4">
    <location>
        <begin position="263"/>
        <end position="272"/>
    </location>
</feature>
<feature type="strand" evidence="4">
    <location>
        <begin position="278"/>
        <end position="281"/>
    </location>
</feature>
<feature type="helix" evidence="4">
    <location>
        <begin position="293"/>
        <end position="299"/>
    </location>
</feature>
<feature type="strand" evidence="4">
    <location>
        <begin position="302"/>
        <end position="305"/>
    </location>
</feature>
<feature type="helix" evidence="4">
    <location>
        <begin position="313"/>
        <end position="321"/>
    </location>
</feature>
<feature type="helix" evidence="4">
    <location>
        <begin position="328"/>
        <end position="330"/>
    </location>
</feature>
<feature type="strand" evidence="4">
    <location>
        <begin position="331"/>
        <end position="336"/>
    </location>
</feature>
<feature type="helix" evidence="4">
    <location>
        <begin position="337"/>
        <end position="339"/>
    </location>
</feature>
<feature type="helix" evidence="4">
    <location>
        <begin position="340"/>
        <end position="348"/>
    </location>
</feature>
<feature type="helix" evidence="4">
    <location>
        <begin position="350"/>
        <end position="352"/>
    </location>
</feature>
<feature type="strand" evidence="4">
    <location>
        <begin position="355"/>
        <end position="360"/>
    </location>
</feature>
<proteinExistence type="evidence at protein level"/>
<evidence type="ECO:0000269" key="1">
    <source>
    </source>
</evidence>
<evidence type="ECO:0000269" key="2">
    <source>
    </source>
</evidence>
<evidence type="ECO:0000305" key="3"/>
<evidence type="ECO:0007829" key="4">
    <source>
        <dbReference type="PDB" id="3M6I"/>
    </source>
</evidence>
<name>LAD_NEUCR</name>
<keyword id="KW-0002">3D-structure</keyword>
<keyword id="KW-0054">Arabinose catabolism</keyword>
<keyword id="KW-0119">Carbohydrate metabolism</keyword>
<keyword id="KW-0479">Metal-binding</keyword>
<keyword id="KW-0520">NAD</keyword>
<keyword id="KW-0547">Nucleotide-binding</keyword>
<keyword id="KW-0560">Oxidoreductase</keyword>
<keyword id="KW-1185">Reference proteome</keyword>
<keyword id="KW-0862">Zinc</keyword>
<protein>
    <recommendedName>
        <fullName>L-arabinitol 4-dehydrogenase</fullName>
        <shortName>LAD</shortName>
        <ecNumber>1.1.1.12</ecNumber>
    </recommendedName>
</protein>
<dbReference type="EC" id="1.1.1.12"/>
<dbReference type="EMBL" id="CM002236">
    <property type="protein sequence ID" value="EAA36547.1"/>
    <property type="molecule type" value="Genomic_DNA"/>
</dbReference>
<dbReference type="RefSeq" id="XP_965783.1">
    <property type="nucleotide sequence ID" value="XM_960690.2"/>
</dbReference>
<dbReference type="PDB" id="3M6I">
    <property type="method" value="X-ray"/>
    <property type="resolution" value="2.60 A"/>
    <property type="chains" value="A/B=1-363"/>
</dbReference>
<dbReference type="PDBsum" id="3M6I"/>
<dbReference type="SMR" id="Q7SI09"/>
<dbReference type="STRING" id="367110.Q7SI09"/>
<dbReference type="PaxDb" id="5141-EFNCRP00000000635"/>
<dbReference type="EnsemblFungi" id="EAA36547">
    <property type="protein sequence ID" value="EAA36547"/>
    <property type="gene ID" value="NCU00643"/>
</dbReference>
<dbReference type="GeneID" id="3881980"/>
<dbReference type="KEGG" id="ncr:NCU00643"/>
<dbReference type="VEuPathDB" id="FungiDB:NCU00643"/>
<dbReference type="HOGENOM" id="CLU_026673_11_5_1"/>
<dbReference type="InParanoid" id="Q7SI09"/>
<dbReference type="OrthoDB" id="2148442at2759"/>
<dbReference type="BRENDA" id="1.1.1.12">
    <property type="organism ID" value="3627"/>
</dbReference>
<dbReference type="UniPathway" id="UPA00146">
    <property type="reaction ID" value="UER00575"/>
</dbReference>
<dbReference type="EvolutionaryTrace" id="Q7SI09"/>
<dbReference type="Proteomes" id="UP000001805">
    <property type="component" value="Chromosome 1, Linkage Group I"/>
</dbReference>
<dbReference type="GO" id="GO:0050019">
    <property type="term" value="F:L-arabinitol 4-dehydrogenase activity"/>
    <property type="evidence" value="ECO:0000314"/>
    <property type="project" value="UniProtKB"/>
</dbReference>
<dbReference type="GO" id="GO:0003939">
    <property type="term" value="F:L-iditol 2-dehydrogenase (NAD+) activity"/>
    <property type="evidence" value="ECO:0000318"/>
    <property type="project" value="GO_Central"/>
</dbReference>
<dbReference type="GO" id="GO:0046872">
    <property type="term" value="F:metal ion binding"/>
    <property type="evidence" value="ECO:0007669"/>
    <property type="project" value="UniProtKB-KW"/>
</dbReference>
<dbReference type="GO" id="GO:0000166">
    <property type="term" value="F:nucleotide binding"/>
    <property type="evidence" value="ECO:0007669"/>
    <property type="project" value="UniProtKB-KW"/>
</dbReference>
<dbReference type="GO" id="GO:0019569">
    <property type="term" value="P:L-arabinose catabolic process to xylulose 5-phosphate"/>
    <property type="evidence" value="ECO:0007669"/>
    <property type="project" value="UniProtKB-UniPathway"/>
</dbReference>
<dbReference type="GO" id="GO:0006062">
    <property type="term" value="P:sorbitol catabolic process"/>
    <property type="evidence" value="ECO:0000318"/>
    <property type="project" value="GO_Central"/>
</dbReference>
<dbReference type="CDD" id="cd05285">
    <property type="entry name" value="sorbitol_DH"/>
    <property type="match status" value="1"/>
</dbReference>
<dbReference type="FunFam" id="3.40.50.720:FF:000068">
    <property type="entry name" value="Sorbitol dehydrogenase"/>
    <property type="match status" value="1"/>
</dbReference>
<dbReference type="Gene3D" id="3.90.180.10">
    <property type="entry name" value="Medium-chain alcohol dehydrogenases, catalytic domain"/>
    <property type="match status" value="1"/>
</dbReference>
<dbReference type="Gene3D" id="3.40.50.720">
    <property type="entry name" value="NAD(P)-binding Rossmann-like Domain"/>
    <property type="match status" value="1"/>
</dbReference>
<dbReference type="InterPro" id="IPR013149">
    <property type="entry name" value="ADH-like_C"/>
</dbReference>
<dbReference type="InterPro" id="IPR013154">
    <property type="entry name" value="ADH-like_N"/>
</dbReference>
<dbReference type="InterPro" id="IPR011032">
    <property type="entry name" value="GroES-like_sf"/>
</dbReference>
<dbReference type="InterPro" id="IPR036291">
    <property type="entry name" value="NAD(P)-bd_dom_sf"/>
</dbReference>
<dbReference type="InterPro" id="IPR045306">
    <property type="entry name" value="SDH-like"/>
</dbReference>
<dbReference type="PANTHER" id="PTHR43161:SF12">
    <property type="entry name" value="L-ARABINITOL 4-DEHYDROGENASE"/>
    <property type="match status" value="1"/>
</dbReference>
<dbReference type="PANTHER" id="PTHR43161">
    <property type="entry name" value="SORBITOL DEHYDROGENASE"/>
    <property type="match status" value="1"/>
</dbReference>
<dbReference type="Pfam" id="PF08240">
    <property type="entry name" value="ADH_N"/>
    <property type="match status" value="1"/>
</dbReference>
<dbReference type="Pfam" id="PF00107">
    <property type="entry name" value="ADH_zinc_N"/>
    <property type="match status" value="1"/>
</dbReference>
<dbReference type="SUPFAM" id="SSF50129">
    <property type="entry name" value="GroES-like"/>
    <property type="match status" value="1"/>
</dbReference>
<dbReference type="SUPFAM" id="SSF51735">
    <property type="entry name" value="NAD(P)-binding Rossmann-fold domains"/>
    <property type="match status" value="1"/>
</dbReference>